<comment type="function">
    <text>Can catalyze the hydrolysis of ATP in the presence of single-stranded DNA, the ATP-dependent uptake of single-stranded DNA by duplex DNA, and the ATP-dependent hybridization of homologous single-stranded DNAs. It interacts with LexA causing its activation and leading to its autocatalytic cleavage.</text>
</comment>
<comment type="subcellular location">
    <subcellularLocation>
        <location evidence="1">Cytoplasm</location>
    </subcellularLocation>
</comment>
<comment type="similarity">
    <text evidence="1">Belongs to the RecA family.</text>
</comment>
<protein>
    <recommendedName>
        <fullName evidence="1">Protein RecA</fullName>
    </recommendedName>
    <alternativeName>
        <fullName evidence="1">Recombinase A</fullName>
    </alternativeName>
</protein>
<organism>
    <name type="scientific">Streptomyces venezuelae (strain ATCC 10712 / CBS 650.69 / DSM 40230 / JCM 4526 / NBRC 13096 / PD 04745)</name>
    <dbReference type="NCBI Taxonomy" id="953739"/>
    <lineage>
        <taxon>Bacteria</taxon>
        <taxon>Bacillati</taxon>
        <taxon>Actinomycetota</taxon>
        <taxon>Actinomycetes</taxon>
        <taxon>Kitasatosporales</taxon>
        <taxon>Streptomycetaceae</taxon>
        <taxon>Streptomyces</taxon>
    </lineage>
</organism>
<sequence>MAGTDREKALDAALAQIERQFGKGAVMRMGDRTQEPIEVISTGSTALDIALGVGGLPRGRVVEIYGPESSGKTTLTLHAVANAQKAGGQVAFVDAEHALDPEYAKKLGVDIDNLILSQPDNGEQALEIVDMLVRSGALDLIVIDSVAALVPRAEIEGEMGDSHVGLQARLMSQALRKITSALNQSKTTAIFINQLREKIGVMFGSPETTTGGRALKFYASVRLDIRRIETLKDGTDAVGNRTRVKVVKNKVAPPFKQAEFDILYGQGISREGGLIDMGVEHGFVRKAGAWYTYEGDQLGQGKENARNFLKDNPDLADEIERKIKEKLGVGVRPDAAKAEAATDAAAAADTAGTDDAAKSVPAPASKTAKATKATAVKS</sequence>
<name>RECA_STRVP</name>
<gene>
    <name evidence="1" type="primary">recA</name>
    <name type="ordered locus">SVEN_5424</name>
</gene>
<dbReference type="EMBL" id="U04837">
    <property type="protein sequence ID" value="AAB36572.1"/>
    <property type="molecule type" value="Genomic_DNA"/>
</dbReference>
<dbReference type="EMBL" id="FR845719">
    <property type="protein sequence ID" value="CCA58710.1"/>
    <property type="molecule type" value="Genomic_DNA"/>
</dbReference>
<dbReference type="RefSeq" id="WP_015036606.1">
    <property type="nucleotide sequence ID" value="NZ_JABVZO010000896.1"/>
</dbReference>
<dbReference type="SMR" id="P48295"/>
<dbReference type="STRING" id="953739.SVEN_5424"/>
<dbReference type="GeneID" id="51865992"/>
<dbReference type="KEGG" id="sve:SVEN_5424"/>
<dbReference type="PATRIC" id="fig|953739.5.peg.566"/>
<dbReference type="eggNOG" id="COG0468">
    <property type="taxonomic scope" value="Bacteria"/>
</dbReference>
<dbReference type="HOGENOM" id="CLU_040469_3_2_11"/>
<dbReference type="Proteomes" id="UP000006854">
    <property type="component" value="Chromosome"/>
</dbReference>
<dbReference type="GO" id="GO:0005829">
    <property type="term" value="C:cytosol"/>
    <property type="evidence" value="ECO:0007669"/>
    <property type="project" value="TreeGrafter"/>
</dbReference>
<dbReference type="GO" id="GO:0005524">
    <property type="term" value="F:ATP binding"/>
    <property type="evidence" value="ECO:0007669"/>
    <property type="project" value="UniProtKB-UniRule"/>
</dbReference>
<dbReference type="GO" id="GO:0016887">
    <property type="term" value="F:ATP hydrolysis activity"/>
    <property type="evidence" value="ECO:0007669"/>
    <property type="project" value="InterPro"/>
</dbReference>
<dbReference type="GO" id="GO:0140664">
    <property type="term" value="F:ATP-dependent DNA damage sensor activity"/>
    <property type="evidence" value="ECO:0007669"/>
    <property type="project" value="InterPro"/>
</dbReference>
<dbReference type="GO" id="GO:0003684">
    <property type="term" value="F:damaged DNA binding"/>
    <property type="evidence" value="ECO:0007669"/>
    <property type="project" value="UniProtKB-UniRule"/>
</dbReference>
<dbReference type="GO" id="GO:0003697">
    <property type="term" value="F:single-stranded DNA binding"/>
    <property type="evidence" value="ECO:0007669"/>
    <property type="project" value="UniProtKB-UniRule"/>
</dbReference>
<dbReference type="GO" id="GO:0006310">
    <property type="term" value="P:DNA recombination"/>
    <property type="evidence" value="ECO:0007669"/>
    <property type="project" value="UniProtKB-UniRule"/>
</dbReference>
<dbReference type="GO" id="GO:0006281">
    <property type="term" value="P:DNA repair"/>
    <property type="evidence" value="ECO:0007669"/>
    <property type="project" value="UniProtKB-UniRule"/>
</dbReference>
<dbReference type="GO" id="GO:0009432">
    <property type="term" value="P:SOS response"/>
    <property type="evidence" value="ECO:0007669"/>
    <property type="project" value="UniProtKB-UniRule"/>
</dbReference>
<dbReference type="CDD" id="cd00983">
    <property type="entry name" value="RecA"/>
    <property type="match status" value="1"/>
</dbReference>
<dbReference type="FunFam" id="3.40.50.300:FF:000087">
    <property type="entry name" value="Recombinase RecA"/>
    <property type="match status" value="1"/>
</dbReference>
<dbReference type="Gene3D" id="3.40.50.300">
    <property type="entry name" value="P-loop containing nucleotide triphosphate hydrolases"/>
    <property type="match status" value="1"/>
</dbReference>
<dbReference type="HAMAP" id="MF_00268">
    <property type="entry name" value="RecA"/>
    <property type="match status" value="1"/>
</dbReference>
<dbReference type="InterPro" id="IPR003593">
    <property type="entry name" value="AAA+_ATPase"/>
</dbReference>
<dbReference type="InterPro" id="IPR013765">
    <property type="entry name" value="DNA_recomb/repair_RecA"/>
</dbReference>
<dbReference type="InterPro" id="IPR020584">
    <property type="entry name" value="DNA_recomb/repair_RecA_CS"/>
</dbReference>
<dbReference type="InterPro" id="IPR027417">
    <property type="entry name" value="P-loop_NTPase"/>
</dbReference>
<dbReference type="InterPro" id="IPR049261">
    <property type="entry name" value="RecA-like_C"/>
</dbReference>
<dbReference type="InterPro" id="IPR049428">
    <property type="entry name" value="RecA-like_N"/>
</dbReference>
<dbReference type="InterPro" id="IPR020588">
    <property type="entry name" value="RecA_ATP-bd"/>
</dbReference>
<dbReference type="InterPro" id="IPR023400">
    <property type="entry name" value="RecA_C_sf"/>
</dbReference>
<dbReference type="InterPro" id="IPR020587">
    <property type="entry name" value="RecA_monomer-monomer_interface"/>
</dbReference>
<dbReference type="NCBIfam" id="TIGR02012">
    <property type="entry name" value="tigrfam_recA"/>
    <property type="match status" value="1"/>
</dbReference>
<dbReference type="PANTHER" id="PTHR45900:SF1">
    <property type="entry name" value="MITOCHONDRIAL DNA REPAIR PROTEIN RECA HOMOLOG-RELATED"/>
    <property type="match status" value="1"/>
</dbReference>
<dbReference type="PANTHER" id="PTHR45900">
    <property type="entry name" value="RECA"/>
    <property type="match status" value="1"/>
</dbReference>
<dbReference type="Pfam" id="PF00154">
    <property type="entry name" value="RecA"/>
    <property type="match status" value="1"/>
</dbReference>
<dbReference type="Pfam" id="PF21096">
    <property type="entry name" value="RecA_C"/>
    <property type="match status" value="1"/>
</dbReference>
<dbReference type="PRINTS" id="PR00142">
    <property type="entry name" value="RECA"/>
</dbReference>
<dbReference type="SMART" id="SM00382">
    <property type="entry name" value="AAA"/>
    <property type="match status" value="1"/>
</dbReference>
<dbReference type="SUPFAM" id="SSF52540">
    <property type="entry name" value="P-loop containing nucleoside triphosphate hydrolases"/>
    <property type="match status" value="1"/>
</dbReference>
<dbReference type="SUPFAM" id="SSF54752">
    <property type="entry name" value="RecA protein, C-terminal domain"/>
    <property type="match status" value="1"/>
</dbReference>
<dbReference type="PROSITE" id="PS00321">
    <property type="entry name" value="RECA_1"/>
    <property type="match status" value="1"/>
</dbReference>
<dbReference type="PROSITE" id="PS50162">
    <property type="entry name" value="RECA_2"/>
    <property type="match status" value="1"/>
</dbReference>
<dbReference type="PROSITE" id="PS50163">
    <property type="entry name" value="RECA_3"/>
    <property type="match status" value="1"/>
</dbReference>
<keyword id="KW-0067">ATP-binding</keyword>
<keyword id="KW-0963">Cytoplasm</keyword>
<keyword id="KW-0227">DNA damage</keyword>
<keyword id="KW-0233">DNA recombination</keyword>
<keyword id="KW-0234">DNA repair</keyword>
<keyword id="KW-0238">DNA-binding</keyword>
<keyword id="KW-0547">Nucleotide-binding</keyword>
<keyword id="KW-1185">Reference proteome</keyword>
<keyword id="KW-0742">SOS response</keyword>
<feature type="chain" id="PRO_0000122871" description="Protein RecA">
    <location>
        <begin position="1"/>
        <end position="378"/>
    </location>
</feature>
<feature type="region of interest" description="Disordered" evidence="2">
    <location>
        <begin position="333"/>
        <end position="378"/>
    </location>
</feature>
<feature type="compositionally biased region" description="Low complexity" evidence="2">
    <location>
        <begin position="338"/>
        <end position="378"/>
    </location>
</feature>
<feature type="binding site" evidence="1">
    <location>
        <begin position="66"/>
        <end position="73"/>
    </location>
    <ligand>
        <name>ATP</name>
        <dbReference type="ChEBI" id="CHEBI:30616"/>
    </ligand>
</feature>
<feature type="sequence conflict" description="In Ref. 1; AAB36572." evidence="3" ref="1">
    <location>
        <position position="348"/>
    </location>
</feature>
<proteinExistence type="inferred from homology"/>
<evidence type="ECO:0000255" key="1">
    <source>
        <dbReference type="HAMAP-Rule" id="MF_00268"/>
    </source>
</evidence>
<evidence type="ECO:0000256" key="2">
    <source>
        <dbReference type="SAM" id="MobiDB-lite"/>
    </source>
</evidence>
<evidence type="ECO:0000305" key="3"/>
<reference key="1">
    <citation type="journal article" date="1994" name="FEMS Microbiol. Lett.">
        <title>Cloning and sequence analysis of a recA-like gene from Streptomyces venezuelae ISP5230.</title>
        <authorList>
            <person name="Yao W."/>
            <person name="Vining L."/>
        </authorList>
    </citation>
    <scope>NUCLEOTIDE SEQUENCE [GENOMIC DNA]</scope>
    <source>
        <strain>ATCC 10712 / CBS 650.69 / DSM 40230 / JCM 4526 / NBRC 13096 / PD 04745</strain>
    </source>
</reference>
<reference key="2">
    <citation type="journal article" date="2011" name="BMC Genomics">
        <title>Genome-wide analysis of the role of GlnR in Streptomyces venezuelae provides new insights into global nitrogen regulation in actinomycetes.</title>
        <authorList>
            <person name="Pullan S.T."/>
            <person name="Chandra G."/>
            <person name="Bibb M.J."/>
            <person name="Merrick M."/>
        </authorList>
    </citation>
    <scope>NUCLEOTIDE SEQUENCE [LARGE SCALE GENOMIC DNA]</scope>
    <source>
        <strain>ATCC 10712 / CBS 650.69 / DSM 40230 / JCM 4526 / NBRC 13096 / PD 04745</strain>
    </source>
</reference>
<accession>P48295</accession>
<accession>F2R6T1</accession>